<reference key="1">
    <citation type="journal article" date="1991" name="J. Bacteriol.">
        <title>Nucleotide sequence and molecular characterization of pnlA, the structural gene for damage-inducible pectin lyase of Erwinia carotovora subsp. carotovora 71.</title>
        <authorList>
            <person name="Chatterjee A."/>
            <person name="McEvoy J.L."/>
            <person name="Chambost J.P."/>
            <person name="Blasco F."/>
            <person name="Chatterjee A.K."/>
        </authorList>
    </citation>
    <scope>NUCLEOTIDE SEQUENCE [GENOMIC DNA]</scope>
    <source>
        <strain>71</strain>
    </source>
</reference>
<dbReference type="EMBL" id="M59909">
    <property type="status" value="NOT_ANNOTATED_CDS"/>
    <property type="molecule type" value="Genomic_DNA"/>
</dbReference>
<dbReference type="SMR" id="P32968"/>
<dbReference type="GO" id="GO:0047661">
    <property type="term" value="F:amino-acid racemase activity"/>
    <property type="evidence" value="ECO:0007669"/>
    <property type="project" value="InterPro"/>
</dbReference>
<dbReference type="Gene3D" id="3.40.50.1860">
    <property type="match status" value="1"/>
</dbReference>
<dbReference type="InterPro" id="IPR015942">
    <property type="entry name" value="Asp/Glu/hydantoin_racemase"/>
</dbReference>
<dbReference type="InterPro" id="IPR001920">
    <property type="entry name" value="Asp/Glu_race"/>
</dbReference>
<dbReference type="InterPro" id="IPR033134">
    <property type="entry name" value="Asp/Glu_racemase_AS_2"/>
</dbReference>
<dbReference type="InterPro" id="IPR004380">
    <property type="entry name" value="Asp_race"/>
</dbReference>
<dbReference type="NCBIfam" id="TIGR00035">
    <property type="entry name" value="asp_race"/>
    <property type="match status" value="1"/>
</dbReference>
<dbReference type="PANTHER" id="PTHR21198:SF7">
    <property type="entry name" value="ASPARTATE-GLUTAMATE RACEMASE FAMILY"/>
    <property type="match status" value="1"/>
</dbReference>
<dbReference type="PANTHER" id="PTHR21198">
    <property type="entry name" value="GLUTAMATE RACEMASE"/>
    <property type="match status" value="1"/>
</dbReference>
<dbReference type="Pfam" id="PF01177">
    <property type="entry name" value="Asp_Glu_race"/>
    <property type="match status" value="1"/>
</dbReference>
<dbReference type="SUPFAM" id="SSF53681">
    <property type="entry name" value="Aspartate/glutamate racemase"/>
    <property type="match status" value="1"/>
</dbReference>
<dbReference type="PROSITE" id="PS00924">
    <property type="entry name" value="ASP_GLU_RACEMASE_2"/>
    <property type="match status" value="1"/>
</dbReference>
<organism>
    <name type="scientific">Pectobacterium carotovorum subsp. carotovorum</name>
    <name type="common">Erwinia carotovora subsp. carotovora</name>
    <dbReference type="NCBI Taxonomy" id="555"/>
    <lineage>
        <taxon>Bacteria</taxon>
        <taxon>Pseudomonadati</taxon>
        <taxon>Pseudomonadota</taxon>
        <taxon>Gammaproteobacteria</taxon>
        <taxon>Enterobacterales</taxon>
        <taxon>Pectobacteriaceae</taxon>
        <taxon>Pectobacterium</taxon>
    </lineage>
</organism>
<keyword id="KW-0413">Isomerase</keyword>
<comment type="similarity">
    <text evidence="1">Belongs to the aspartate/glutamate racemases family.</text>
</comment>
<evidence type="ECO:0000305" key="1"/>
<proteinExistence type="inferred from homology"/>
<sequence>WFNDLKQQCRAEMISIIDVTCQAIKHANTTRVGLLATTATVKARIYQDNLITDNIDCYTPDDADQHQVMESIYAYKSGDIAGAYSLLSPVKDRLLQAGVEKIILGCTELPLILEQEVRTSPQHYVDATEELIKKTVEWYFTHNTRNNIAA</sequence>
<name>YPNL_PECCC</name>
<feature type="chain" id="PRO_0000095538" description="Uncharacterized protein in pnlA 3'region">
    <location>
        <begin position="1" status="less than"/>
        <end position="150"/>
    </location>
</feature>
<feature type="non-terminal residue">
    <location>
        <position position="1"/>
    </location>
</feature>
<accession>P32968</accession>
<protein>
    <recommendedName>
        <fullName>Uncharacterized protein in pnlA 3'region</fullName>
    </recommendedName>
</protein>